<gene>
    <name type="primary">NPTN</name>
    <name type="synonym">SDFR1</name>
    <name type="synonym">SDR1</name>
</gene>
<reference key="1">
    <citation type="journal article" date="1999" name="Biomed. Res.">
        <title>Isoform specific expression of the SDR-1 protein, alpha and beta in subregions of adult rodent brain.</title>
        <authorList>
            <person name="Lopez N.D."/>
            <person name="Kinoshita A."/>
            <person name="Taniwaki M."/>
            <person name="Tada H."/>
            <person name="Shirozu M."/>
            <person name="Nakano T."/>
            <person name="Tashiro K."/>
            <person name="Honjo T."/>
        </authorList>
    </citation>
    <scope>NUCLEOTIDE SEQUENCE [MRNA] (ISOFORMS 1; 2 AND 3)</scope>
    <scope>TISSUE SPECIFICITY</scope>
</reference>
<reference key="2">
    <citation type="journal article" date="2004" name="Nat. Genet.">
        <title>Complete sequencing and characterization of 21,243 full-length human cDNAs.</title>
        <authorList>
            <person name="Ota T."/>
            <person name="Suzuki Y."/>
            <person name="Nishikawa T."/>
            <person name="Otsuki T."/>
            <person name="Sugiyama T."/>
            <person name="Irie R."/>
            <person name="Wakamatsu A."/>
            <person name="Hayashi K."/>
            <person name="Sato H."/>
            <person name="Nagai K."/>
            <person name="Kimura K."/>
            <person name="Makita H."/>
            <person name="Sekine M."/>
            <person name="Obayashi M."/>
            <person name="Nishi T."/>
            <person name="Shibahara T."/>
            <person name="Tanaka T."/>
            <person name="Ishii S."/>
            <person name="Yamamoto J."/>
            <person name="Saito K."/>
            <person name="Kawai Y."/>
            <person name="Isono Y."/>
            <person name="Nakamura Y."/>
            <person name="Nagahari K."/>
            <person name="Murakami K."/>
            <person name="Yasuda T."/>
            <person name="Iwayanagi T."/>
            <person name="Wagatsuma M."/>
            <person name="Shiratori A."/>
            <person name="Sudo H."/>
            <person name="Hosoiri T."/>
            <person name="Kaku Y."/>
            <person name="Kodaira H."/>
            <person name="Kondo H."/>
            <person name="Sugawara M."/>
            <person name="Takahashi M."/>
            <person name="Kanda K."/>
            <person name="Yokoi T."/>
            <person name="Furuya T."/>
            <person name="Kikkawa E."/>
            <person name="Omura Y."/>
            <person name="Abe K."/>
            <person name="Kamihara K."/>
            <person name="Katsuta N."/>
            <person name="Sato K."/>
            <person name="Tanikawa M."/>
            <person name="Yamazaki M."/>
            <person name="Ninomiya K."/>
            <person name="Ishibashi T."/>
            <person name="Yamashita H."/>
            <person name="Murakawa K."/>
            <person name="Fujimori K."/>
            <person name="Tanai H."/>
            <person name="Kimata M."/>
            <person name="Watanabe M."/>
            <person name="Hiraoka S."/>
            <person name="Chiba Y."/>
            <person name="Ishida S."/>
            <person name="Ono Y."/>
            <person name="Takiguchi S."/>
            <person name="Watanabe S."/>
            <person name="Yosida M."/>
            <person name="Hotuta T."/>
            <person name="Kusano J."/>
            <person name="Kanehori K."/>
            <person name="Takahashi-Fujii A."/>
            <person name="Hara H."/>
            <person name="Tanase T.-O."/>
            <person name="Nomura Y."/>
            <person name="Togiya S."/>
            <person name="Komai F."/>
            <person name="Hara R."/>
            <person name="Takeuchi K."/>
            <person name="Arita M."/>
            <person name="Imose N."/>
            <person name="Musashino K."/>
            <person name="Yuuki H."/>
            <person name="Oshima A."/>
            <person name="Sasaki N."/>
            <person name="Aotsuka S."/>
            <person name="Yoshikawa Y."/>
            <person name="Matsunawa H."/>
            <person name="Ichihara T."/>
            <person name="Shiohata N."/>
            <person name="Sano S."/>
            <person name="Moriya S."/>
            <person name="Momiyama H."/>
            <person name="Satoh N."/>
            <person name="Takami S."/>
            <person name="Terashima Y."/>
            <person name="Suzuki O."/>
            <person name="Nakagawa S."/>
            <person name="Senoh A."/>
            <person name="Mizoguchi H."/>
            <person name="Goto Y."/>
            <person name="Shimizu F."/>
            <person name="Wakebe H."/>
            <person name="Hishigaki H."/>
            <person name="Watanabe T."/>
            <person name="Sugiyama A."/>
            <person name="Takemoto M."/>
            <person name="Kawakami B."/>
            <person name="Yamazaki M."/>
            <person name="Watanabe K."/>
            <person name="Kumagai A."/>
            <person name="Itakura S."/>
            <person name="Fukuzumi Y."/>
            <person name="Fujimori Y."/>
            <person name="Komiyama M."/>
            <person name="Tashiro H."/>
            <person name="Tanigami A."/>
            <person name="Fujiwara T."/>
            <person name="Ono T."/>
            <person name="Yamada K."/>
            <person name="Fujii Y."/>
            <person name="Ozaki K."/>
            <person name="Hirao M."/>
            <person name="Ohmori Y."/>
            <person name="Kawabata A."/>
            <person name="Hikiji T."/>
            <person name="Kobatake N."/>
            <person name="Inagaki H."/>
            <person name="Ikema Y."/>
            <person name="Okamoto S."/>
            <person name="Okitani R."/>
            <person name="Kawakami T."/>
            <person name="Noguchi S."/>
            <person name="Itoh T."/>
            <person name="Shigeta K."/>
            <person name="Senba T."/>
            <person name="Matsumura K."/>
            <person name="Nakajima Y."/>
            <person name="Mizuno T."/>
            <person name="Morinaga M."/>
            <person name="Sasaki M."/>
            <person name="Togashi T."/>
            <person name="Oyama M."/>
            <person name="Hata H."/>
            <person name="Watanabe M."/>
            <person name="Komatsu T."/>
            <person name="Mizushima-Sugano J."/>
            <person name="Satoh T."/>
            <person name="Shirai Y."/>
            <person name="Takahashi Y."/>
            <person name="Nakagawa K."/>
            <person name="Okumura K."/>
            <person name="Nagase T."/>
            <person name="Nomura N."/>
            <person name="Kikuchi H."/>
            <person name="Masuho Y."/>
            <person name="Yamashita R."/>
            <person name="Nakai K."/>
            <person name="Yada T."/>
            <person name="Nakamura Y."/>
            <person name="Ohara O."/>
            <person name="Isogai T."/>
            <person name="Sugano S."/>
        </authorList>
    </citation>
    <scope>NUCLEOTIDE SEQUENCE [LARGE SCALE MRNA] (ISOFORMS 1 AND 5)</scope>
    <source>
        <tissue>Brain</tissue>
        <tissue>Stomach</tissue>
    </source>
</reference>
<reference key="3">
    <citation type="submission" date="2005-03" db="EMBL/GenBank/DDBJ databases">
        <authorList>
            <person name="Totoki Y."/>
            <person name="Toyoda A."/>
            <person name="Takeda T."/>
            <person name="Sakaki Y."/>
            <person name="Tanaka A."/>
            <person name="Yokoyama S."/>
            <person name="Ohara O."/>
            <person name="Nagase T."/>
            <person name="Kikuno R.F."/>
        </authorList>
    </citation>
    <scope>NUCLEOTIDE SEQUENCE [LARGE SCALE MRNA] (ISOFORM 4)</scope>
    <source>
        <tissue>Brain</tissue>
    </source>
</reference>
<reference key="4">
    <citation type="submission" date="2005-07" db="EMBL/GenBank/DDBJ databases">
        <authorList>
            <person name="Mural R.J."/>
            <person name="Istrail S."/>
            <person name="Sutton G."/>
            <person name="Florea L."/>
            <person name="Halpern A.L."/>
            <person name="Mobarry C.M."/>
            <person name="Lippert R."/>
            <person name="Walenz B."/>
            <person name="Shatkay H."/>
            <person name="Dew I."/>
            <person name="Miller J.R."/>
            <person name="Flanigan M.J."/>
            <person name="Edwards N.J."/>
            <person name="Bolanos R."/>
            <person name="Fasulo D."/>
            <person name="Halldorsson B.V."/>
            <person name="Hannenhalli S."/>
            <person name="Turner R."/>
            <person name="Yooseph S."/>
            <person name="Lu F."/>
            <person name="Nusskern D.R."/>
            <person name="Shue B.C."/>
            <person name="Zheng X.H."/>
            <person name="Zhong F."/>
            <person name="Delcher A.L."/>
            <person name="Huson D.H."/>
            <person name="Kravitz S.A."/>
            <person name="Mouchard L."/>
            <person name="Reinert K."/>
            <person name="Remington K.A."/>
            <person name="Clark A.G."/>
            <person name="Waterman M.S."/>
            <person name="Eichler E.E."/>
            <person name="Adams M.D."/>
            <person name="Hunkapiller M.W."/>
            <person name="Myers E.W."/>
            <person name="Venter J.C."/>
        </authorList>
    </citation>
    <scope>NUCLEOTIDE SEQUENCE [LARGE SCALE GENOMIC DNA]</scope>
</reference>
<reference key="5">
    <citation type="journal article" date="2004" name="Genome Res.">
        <title>The status, quality, and expansion of the NIH full-length cDNA project: the Mammalian Gene Collection (MGC).</title>
        <authorList>
            <consortium name="The MGC Project Team"/>
        </authorList>
    </citation>
    <scope>NUCLEOTIDE SEQUENCE [LARGE SCALE MRNA] (ISOFORMS 1 AND 3)</scope>
    <source>
        <tissue>Brain</tissue>
        <tissue>Skin</tissue>
    </source>
</reference>
<reference key="6">
    <citation type="journal article" date="2004" name="Protein Sci.">
        <title>Signal peptide prediction based on analysis of experimentally verified cleavage sites.</title>
        <authorList>
            <person name="Zhang Z."/>
            <person name="Henzel W.J."/>
        </authorList>
    </citation>
    <scope>PROTEIN SEQUENCE OF 29-43 (ISOFORM 1)</scope>
</reference>
<reference key="7">
    <citation type="journal article" date="2007" name="Brain Res.">
        <title>The immunolocalization of the synaptic glycoprotein neuroplastin differs substantially between the human and the rodent brain.</title>
        <authorList>
            <person name="Bernstein H.G."/>
            <person name="Smalla K.H."/>
            <person name="Bogerts B."/>
            <person name="Gordon-Weeks P.R."/>
            <person name="Beesley P.W."/>
            <person name="Gundelfinger E.D."/>
            <person name="Kreutz M.R."/>
        </authorList>
    </citation>
    <scope>TISSUE SPECIFICITY</scope>
</reference>
<reference key="8">
    <citation type="journal article" date="2009" name="J. Proteome Res.">
        <title>Glycoproteomics analysis of human liver tissue by combination of multiple enzyme digestion and hydrazide chemistry.</title>
        <authorList>
            <person name="Chen R."/>
            <person name="Jiang X."/>
            <person name="Sun D."/>
            <person name="Han G."/>
            <person name="Wang F."/>
            <person name="Ye M."/>
            <person name="Wang L."/>
            <person name="Zou H."/>
        </authorList>
    </citation>
    <scope>GLYCOSYLATION [LARGE SCALE ANALYSIS] AT ASN-284 AND ASN-296</scope>
    <source>
        <tissue>Liver</tissue>
    </source>
</reference>
<reference key="9">
    <citation type="journal article" date="2009" name="Nat. Biotechnol.">
        <title>Mass-spectrometric identification and relative quantification of N-linked cell surface glycoproteins.</title>
        <authorList>
            <person name="Wollscheid B."/>
            <person name="Bausch-Fluck D."/>
            <person name="Henderson C."/>
            <person name="O'Brien R."/>
            <person name="Bibel M."/>
            <person name="Schiess R."/>
            <person name="Aebersold R."/>
            <person name="Watts J.D."/>
        </authorList>
    </citation>
    <scope>GLYCOSYLATION [LARGE SCALE ANALYSIS] AT ASN-229</scope>
    <source>
        <tissue>Leukemic T-cell</tissue>
    </source>
</reference>
<reference key="10">
    <citation type="journal article" date="2011" name="BMC Syst. Biol.">
        <title>Initial characterization of the human central proteome.</title>
        <authorList>
            <person name="Burkard T.R."/>
            <person name="Planyavsky M."/>
            <person name="Kaupe I."/>
            <person name="Breitwieser F.P."/>
            <person name="Buerckstuemmer T."/>
            <person name="Bennett K.L."/>
            <person name="Superti-Furga G."/>
            <person name="Colinge J."/>
        </authorList>
    </citation>
    <scope>IDENTIFICATION BY MASS SPECTROMETRY [LARGE SCALE ANALYSIS]</scope>
</reference>
<reference key="11">
    <citation type="journal article" date="2016" name="Proc. Natl. Acad. Sci. U.S.A.">
        <title>Xkr8 phospholipid scrambling complex in apoptotic phosphatidylserine exposure.</title>
        <authorList>
            <person name="Suzuki J."/>
            <person name="Imanishi E."/>
            <person name="Nagata S."/>
        </authorList>
    </citation>
    <scope>FUNCTION</scope>
    <scope>INTERACTION WITH XKR8</scope>
</reference>
<reference evidence="17" key="12">
    <citation type="journal article" date="2018" name="Nat. Commun.">
        <title>Structure of the human plasma membrane Ca2+-ATPase 1 in complex with its obligatory subunit neuroplastin.</title>
        <authorList>
            <person name="Gong D."/>
            <person name="Chi X."/>
            <person name="Ren K."/>
            <person name="Huang G."/>
            <person name="Zhou G."/>
            <person name="Yan N."/>
            <person name="Lei J."/>
            <person name="Zhou Q."/>
        </authorList>
    </citation>
    <scope>STRUCTURE BY ELECTRON MICROSCOPY (4.11 ANGSTROMS) IN COMPLEX WITH ATP2B1</scope>
    <scope>FUNCTION</scope>
    <scope>TOPOLOGY</scope>
    <scope>DISULFIDE BOND</scope>
</reference>
<keyword id="KW-0002">3D-structure</keyword>
<keyword id="KW-0025">Alternative splicing</keyword>
<keyword id="KW-0130">Cell adhesion</keyword>
<keyword id="KW-1003">Cell membrane</keyword>
<keyword id="KW-0903">Direct protein sequencing</keyword>
<keyword id="KW-1015">Disulfide bond</keyword>
<keyword id="KW-0325">Glycoprotein</keyword>
<keyword id="KW-0393">Immunoglobulin domain</keyword>
<keyword id="KW-0472">Membrane</keyword>
<keyword id="KW-0524">Neurogenesis</keyword>
<keyword id="KW-1267">Proteomics identification</keyword>
<keyword id="KW-1185">Reference proteome</keyword>
<keyword id="KW-0677">Repeat</keyword>
<keyword id="KW-0732">Signal</keyword>
<keyword id="KW-0770">Synapse</keyword>
<keyword id="KW-0812">Transmembrane</keyword>
<keyword id="KW-1133">Transmembrane helix</keyword>
<proteinExistence type="evidence at protein level"/>
<dbReference type="EMBL" id="AF109126">
    <property type="protein sequence ID" value="AAD43217.1"/>
    <property type="molecule type" value="mRNA"/>
</dbReference>
<dbReference type="EMBL" id="AF109127">
    <property type="protein sequence ID" value="AAD43218.1"/>
    <property type="molecule type" value="mRNA"/>
</dbReference>
<dbReference type="EMBL" id="AK297184">
    <property type="protein sequence ID" value="BAH12519.1"/>
    <property type="molecule type" value="mRNA"/>
</dbReference>
<dbReference type="EMBL" id="AK314248">
    <property type="protein sequence ID" value="BAG36914.1"/>
    <property type="molecule type" value="mRNA"/>
</dbReference>
<dbReference type="EMBL" id="AB209812">
    <property type="protein sequence ID" value="BAD93049.1"/>
    <property type="status" value="ALT_INIT"/>
    <property type="molecule type" value="mRNA"/>
</dbReference>
<dbReference type="EMBL" id="CH471082">
    <property type="protein sequence ID" value="EAW77931.1"/>
    <property type="molecule type" value="Genomic_DNA"/>
</dbReference>
<dbReference type="EMBL" id="BC105979">
    <property type="protein sequence ID" value="AAI05980.1"/>
    <property type="molecule type" value="mRNA"/>
</dbReference>
<dbReference type="EMBL" id="BC117462">
    <property type="protein sequence ID" value="AAI17463.1"/>
    <property type="molecule type" value="mRNA"/>
</dbReference>
<dbReference type="EMBL" id="BC143880">
    <property type="protein sequence ID" value="AAI43881.1"/>
    <property type="molecule type" value="mRNA"/>
</dbReference>
<dbReference type="EMBL" id="BC143881">
    <property type="protein sequence ID" value="AAI43882.1"/>
    <property type="molecule type" value="mRNA"/>
</dbReference>
<dbReference type="CCDS" id="CCDS10249.1">
    <molecule id="Q9Y639-2"/>
</dbReference>
<dbReference type="CCDS" id="CCDS10250.1">
    <molecule id="Q9Y639-1"/>
</dbReference>
<dbReference type="CCDS" id="CCDS58379.1">
    <molecule id="Q9Y639-3"/>
</dbReference>
<dbReference type="CCDS" id="CCDS58380.1">
    <molecule id="Q9Y639-5"/>
</dbReference>
<dbReference type="PIR" id="T17219">
    <property type="entry name" value="T17219"/>
</dbReference>
<dbReference type="RefSeq" id="NP_001154835.1">
    <molecule id="Q9Y639-5"/>
    <property type="nucleotide sequence ID" value="NM_001161363.2"/>
</dbReference>
<dbReference type="RefSeq" id="NP_001154836.1">
    <molecule id="Q9Y639-3"/>
    <property type="nucleotide sequence ID" value="NM_001161364.2"/>
</dbReference>
<dbReference type="RefSeq" id="NP_036560.1">
    <molecule id="Q9Y639-2"/>
    <property type="nucleotide sequence ID" value="NM_012428.4"/>
</dbReference>
<dbReference type="RefSeq" id="NP_059429.1">
    <molecule id="Q9Y639-1"/>
    <property type="nucleotide sequence ID" value="NM_017455.4"/>
</dbReference>
<dbReference type="PDB" id="6A69">
    <property type="method" value="EM"/>
    <property type="resolution" value="4.11 A"/>
    <property type="chains" value="B=146-398"/>
</dbReference>
<dbReference type="PDBsum" id="6A69"/>
<dbReference type="EMDB" id="EMD-6987"/>
<dbReference type="SMR" id="Q9Y639"/>
<dbReference type="BioGRID" id="117958">
    <property type="interactions" value="273"/>
</dbReference>
<dbReference type="FunCoup" id="Q9Y639">
    <property type="interactions" value="440"/>
</dbReference>
<dbReference type="IntAct" id="Q9Y639">
    <property type="interactions" value="226"/>
</dbReference>
<dbReference type="MINT" id="Q9Y639"/>
<dbReference type="STRING" id="9606.ENSP00000290401"/>
<dbReference type="TCDB" id="8.A.23.1.8">
    <property type="family name" value="the basigin (basigin) family"/>
</dbReference>
<dbReference type="GlyConnect" id="1558">
    <property type="glycosylation" value="7 N-Linked glycans (2 sites)"/>
</dbReference>
<dbReference type="GlyCosmos" id="Q9Y639">
    <property type="glycosylation" value="6 sites, 7 glycans"/>
</dbReference>
<dbReference type="GlyGen" id="Q9Y639">
    <property type="glycosylation" value="9 sites, 36 N-linked glycans (4 sites), 1 O-linked glycan (1 site)"/>
</dbReference>
<dbReference type="iPTMnet" id="Q9Y639"/>
<dbReference type="PhosphoSitePlus" id="Q9Y639"/>
<dbReference type="SwissPalm" id="Q9Y639"/>
<dbReference type="BioMuta" id="NPTN"/>
<dbReference type="DMDM" id="298286871"/>
<dbReference type="jPOST" id="Q9Y639"/>
<dbReference type="MassIVE" id="Q9Y639"/>
<dbReference type="PaxDb" id="9606-ENSP00000290401"/>
<dbReference type="PeptideAtlas" id="Q9Y639"/>
<dbReference type="ProteomicsDB" id="86593">
    <molecule id="Q9Y639-2"/>
</dbReference>
<dbReference type="ProteomicsDB" id="86594">
    <molecule id="Q9Y639-1"/>
</dbReference>
<dbReference type="ProteomicsDB" id="86595">
    <molecule id="Q9Y639-3"/>
</dbReference>
<dbReference type="ProteomicsDB" id="86596">
    <molecule id="Q9Y639-4"/>
</dbReference>
<dbReference type="ProteomicsDB" id="86597">
    <molecule id="Q9Y639-5"/>
</dbReference>
<dbReference type="Pumba" id="Q9Y639"/>
<dbReference type="Antibodypedia" id="26797">
    <property type="antibodies" value="345 antibodies from 27 providers"/>
</dbReference>
<dbReference type="DNASU" id="27020"/>
<dbReference type="Ensembl" id="ENST00000345330.9">
    <molecule id="Q9Y639-2"/>
    <property type="protein sequence ID" value="ENSP00000290401.4"/>
    <property type="gene ID" value="ENSG00000156642.17"/>
</dbReference>
<dbReference type="Ensembl" id="ENST00000351217.10">
    <molecule id="Q9Y639-1"/>
    <property type="protein sequence ID" value="ENSP00000342958.6"/>
    <property type="gene ID" value="ENSG00000156642.17"/>
</dbReference>
<dbReference type="Ensembl" id="ENST00000562924.5">
    <molecule id="Q9Y639-3"/>
    <property type="protein sequence ID" value="ENSP00000456349.1"/>
    <property type="gene ID" value="ENSG00000156642.17"/>
</dbReference>
<dbReference type="Ensembl" id="ENST00000563691.5">
    <molecule id="Q9Y639-5"/>
    <property type="protein sequence ID" value="ENSP00000457028.1"/>
    <property type="gene ID" value="ENSG00000156642.17"/>
</dbReference>
<dbReference type="GeneID" id="27020"/>
<dbReference type="KEGG" id="hsa:27020"/>
<dbReference type="MANE-Select" id="ENST00000345330.9">
    <property type="protein sequence ID" value="ENSP00000290401.4"/>
    <property type="RefSeq nucleotide sequence ID" value="NM_012428.4"/>
    <property type="RefSeq protein sequence ID" value="NP_036560.1"/>
</dbReference>
<dbReference type="UCSC" id="uc002avr.4">
    <molecule id="Q9Y639-2"/>
    <property type="organism name" value="human"/>
</dbReference>
<dbReference type="AGR" id="HGNC:17867"/>
<dbReference type="CTD" id="27020"/>
<dbReference type="DisGeNET" id="27020"/>
<dbReference type="GeneCards" id="NPTN"/>
<dbReference type="HGNC" id="HGNC:17867">
    <property type="gene designation" value="NPTN"/>
</dbReference>
<dbReference type="HPA" id="ENSG00000156642">
    <property type="expression patterns" value="Low tissue specificity"/>
</dbReference>
<dbReference type="MIM" id="612820">
    <property type="type" value="gene"/>
</dbReference>
<dbReference type="neXtProt" id="NX_Q9Y639"/>
<dbReference type="OpenTargets" id="ENSG00000156642"/>
<dbReference type="PharmGKB" id="PA134927704"/>
<dbReference type="VEuPathDB" id="HostDB:ENSG00000156642"/>
<dbReference type="eggNOG" id="ENOG502QPKN">
    <property type="taxonomic scope" value="Eukaryota"/>
</dbReference>
<dbReference type="GeneTree" id="ENSGT00940000156195"/>
<dbReference type="HOGENOM" id="CLU_058449_0_0_1"/>
<dbReference type="InParanoid" id="Q9Y639"/>
<dbReference type="OMA" id="GRYECNA"/>
<dbReference type="OrthoDB" id="5970915at2759"/>
<dbReference type="PAN-GO" id="Q9Y639">
    <property type="GO annotations" value="6 GO annotations based on evolutionary models"/>
</dbReference>
<dbReference type="PhylomeDB" id="Q9Y639"/>
<dbReference type="TreeFam" id="TF326759"/>
<dbReference type="PathwayCommons" id="Q9Y639"/>
<dbReference type="Reactome" id="R-HSA-977443">
    <property type="pathway name" value="GABA receptor activation"/>
</dbReference>
<dbReference type="SignaLink" id="Q9Y639"/>
<dbReference type="BioGRID-ORCS" id="27020">
    <property type="hits" value="8 hits in 1156 CRISPR screens"/>
</dbReference>
<dbReference type="CD-CODE" id="FB4E32DD">
    <property type="entry name" value="Presynaptic clusters and postsynaptic densities"/>
</dbReference>
<dbReference type="ChiTaRS" id="NPTN">
    <property type="organism name" value="human"/>
</dbReference>
<dbReference type="GeneWiki" id="NPTN"/>
<dbReference type="GenomeRNAi" id="27020"/>
<dbReference type="Pharos" id="Q9Y639">
    <property type="development level" value="Tbio"/>
</dbReference>
<dbReference type="PRO" id="PR:Q9Y639"/>
<dbReference type="Proteomes" id="UP000005640">
    <property type="component" value="Chromosome 15"/>
</dbReference>
<dbReference type="RNAct" id="Q9Y639">
    <property type="molecule type" value="protein"/>
</dbReference>
<dbReference type="Bgee" id="ENSG00000156642">
    <property type="expression patterns" value="Expressed in Brodmann (1909) area 23 and 211 other cell types or tissues"/>
</dbReference>
<dbReference type="ExpressionAtlas" id="Q9Y639">
    <property type="expression patterns" value="baseline and differential"/>
</dbReference>
<dbReference type="GO" id="GO:0030424">
    <property type="term" value="C:axon"/>
    <property type="evidence" value="ECO:0000318"/>
    <property type="project" value="GO_Central"/>
</dbReference>
<dbReference type="GO" id="GO:0009986">
    <property type="term" value="C:cell surface"/>
    <property type="evidence" value="ECO:0007005"/>
    <property type="project" value="UniProtKB"/>
</dbReference>
<dbReference type="GO" id="GO:0001772">
    <property type="term" value="C:immunological synapse"/>
    <property type="evidence" value="ECO:0000250"/>
    <property type="project" value="UniProtKB"/>
</dbReference>
<dbReference type="GO" id="GO:0005886">
    <property type="term" value="C:plasma membrane"/>
    <property type="evidence" value="ECO:0000318"/>
    <property type="project" value="GO_Central"/>
</dbReference>
<dbReference type="GO" id="GO:0014069">
    <property type="term" value="C:postsynaptic density"/>
    <property type="evidence" value="ECO:0007669"/>
    <property type="project" value="UniProtKB-SubCell"/>
</dbReference>
<dbReference type="GO" id="GO:0042734">
    <property type="term" value="C:presynaptic membrane"/>
    <property type="evidence" value="ECO:0000250"/>
    <property type="project" value="HGNC-UCL"/>
</dbReference>
<dbReference type="GO" id="GO:0050839">
    <property type="term" value="F:cell adhesion molecule binding"/>
    <property type="evidence" value="ECO:0000250"/>
    <property type="project" value="HGNC-UCL"/>
</dbReference>
<dbReference type="GO" id="GO:0098632">
    <property type="term" value="F:cell-cell adhesion mediator activity"/>
    <property type="evidence" value="ECO:0000318"/>
    <property type="project" value="GO_Central"/>
</dbReference>
<dbReference type="GO" id="GO:0005105">
    <property type="term" value="F:type 1 fibroblast growth factor receptor binding"/>
    <property type="evidence" value="ECO:0000250"/>
    <property type="project" value="UniProtKB"/>
</dbReference>
<dbReference type="GO" id="GO:0007411">
    <property type="term" value="P:axon guidance"/>
    <property type="evidence" value="ECO:0000318"/>
    <property type="project" value="GO_Central"/>
</dbReference>
<dbReference type="GO" id="GO:0070593">
    <property type="term" value="P:dendrite self-avoidance"/>
    <property type="evidence" value="ECO:0000318"/>
    <property type="project" value="GO_Central"/>
</dbReference>
<dbReference type="GO" id="GO:1904861">
    <property type="term" value="P:excitatory synapse assembly"/>
    <property type="evidence" value="ECO:0007669"/>
    <property type="project" value="Ensembl"/>
</dbReference>
<dbReference type="GO" id="GO:0007156">
    <property type="term" value="P:homophilic cell adhesion via plasma membrane adhesion molecules"/>
    <property type="evidence" value="ECO:0000250"/>
    <property type="project" value="HGNC-UCL"/>
</dbReference>
<dbReference type="GO" id="GO:0006874">
    <property type="term" value="P:intracellular calcium ion homeostasis"/>
    <property type="evidence" value="ECO:0000250"/>
    <property type="project" value="UniProtKB"/>
</dbReference>
<dbReference type="GO" id="GO:0060291">
    <property type="term" value="P:long-term synaptic potentiation"/>
    <property type="evidence" value="ECO:0000250"/>
    <property type="project" value="UniProtKB"/>
</dbReference>
<dbReference type="GO" id="GO:0001818">
    <property type="term" value="P:negative regulation of cytokine production"/>
    <property type="evidence" value="ECO:0000250"/>
    <property type="project" value="UniProtKB"/>
</dbReference>
<dbReference type="GO" id="GO:0007204">
    <property type="term" value="P:positive regulation of cytosolic calcium ion concentration"/>
    <property type="evidence" value="ECO:0000250"/>
    <property type="project" value="UniProtKB"/>
</dbReference>
<dbReference type="GO" id="GO:0045743">
    <property type="term" value="P:positive regulation of fibroblast growth factor receptor signaling pathway"/>
    <property type="evidence" value="ECO:0000250"/>
    <property type="project" value="UniProtKB"/>
</dbReference>
<dbReference type="GO" id="GO:0048170">
    <property type="term" value="P:positive regulation of long-term neuronal synaptic plasticity"/>
    <property type="evidence" value="ECO:0000250"/>
    <property type="project" value="HGNC-UCL"/>
</dbReference>
<dbReference type="GO" id="GO:0010976">
    <property type="term" value="P:positive regulation of neuron projection development"/>
    <property type="evidence" value="ECO:0000250"/>
    <property type="project" value="UniProtKB"/>
</dbReference>
<dbReference type="GO" id="GO:0001934">
    <property type="term" value="P:positive regulation of protein phosphorylation"/>
    <property type="evidence" value="ECO:0000250"/>
    <property type="project" value="UniProtKB"/>
</dbReference>
<dbReference type="GO" id="GO:1902683">
    <property type="term" value="P:regulation of receptor localization to synapse"/>
    <property type="evidence" value="ECO:0007669"/>
    <property type="project" value="Ensembl"/>
</dbReference>
<dbReference type="FunFam" id="2.60.40.10:FF:000385">
    <property type="entry name" value="Neuroplastin a"/>
    <property type="match status" value="1"/>
</dbReference>
<dbReference type="FunFam" id="2.60.40.10:FF:000291">
    <property type="entry name" value="Neuroplastin b"/>
    <property type="match status" value="1"/>
</dbReference>
<dbReference type="FunFam" id="2.60.40.10:FF:000387">
    <property type="entry name" value="Neuroplastin b"/>
    <property type="match status" value="1"/>
</dbReference>
<dbReference type="Gene3D" id="2.60.40.10">
    <property type="entry name" value="Immunoglobulins"/>
    <property type="match status" value="3"/>
</dbReference>
<dbReference type="InterPro" id="IPR007110">
    <property type="entry name" value="Ig-like_dom"/>
</dbReference>
<dbReference type="InterPro" id="IPR036179">
    <property type="entry name" value="Ig-like_dom_sf"/>
</dbReference>
<dbReference type="InterPro" id="IPR013783">
    <property type="entry name" value="Ig-like_fold"/>
</dbReference>
<dbReference type="InterPro" id="IPR013098">
    <property type="entry name" value="Ig_I-set"/>
</dbReference>
<dbReference type="InterPro" id="IPR003599">
    <property type="entry name" value="Ig_sub"/>
</dbReference>
<dbReference type="InterPro" id="IPR003598">
    <property type="entry name" value="Ig_sub2"/>
</dbReference>
<dbReference type="PANTHER" id="PTHR10075">
    <property type="entry name" value="BASIGIN RELATED"/>
    <property type="match status" value="1"/>
</dbReference>
<dbReference type="PANTHER" id="PTHR10075:SF108">
    <property type="entry name" value="NEUROPLASTIN"/>
    <property type="match status" value="1"/>
</dbReference>
<dbReference type="Pfam" id="PF07679">
    <property type="entry name" value="I-set"/>
    <property type="match status" value="1"/>
</dbReference>
<dbReference type="Pfam" id="PF13927">
    <property type="entry name" value="Ig_3"/>
    <property type="match status" value="1"/>
</dbReference>
<dbReference type="PIRSF" id="PIRSF000615">
    <property type="entry name" value="TyrPK_CSF1-R"/>
    <property type="match status" value="1"/>
</dbReference>
<dbReference type="SMART" id="SM00409">
    <property type="entry name" value="IG"/>
    <property type="match status" value="3"/>
</dbReference>
<dbReference type="SMART" id="SM00408">
    <property type="entry name" value="IGc2"/>
    <property type="match status" value="2"/>
</dbReference>
<dbReference type="SUPFAM" id="SSF48726">
    <property type="entry name" value="Immunoglobulin"/>
    <property type="match status" value="3"/>
</dbReference>
<dbReference type="PROSITE" id="PS50835">
    <property type="entry name" value="IG_LIKE"/>
    <property type="match status" value="3"/>
</dbReference>
<evidence type="ECO:0000250" key="1"/>
<evidence type="ECO:0000250" key="2">
    <source>
        <dbReference type="UniProtKB" id="P97546"/>
    </source>
</evidence>
<evidence type="ECO:0000255" key="3"/>
<evidence type="ECO:0000255" key="4">
    <source>
        <dbReference type="PROSITE-ProRule" id="PRU00114"/>
    </source>
</evidence>
<evidence type="ECO:0000256" key="5">
    <source>
        <dbReference type="SAM" id="MobiDB-lite"/>
    </source>
</evidence>
<evidence type="ECO:0000269" key="6">
    <source>
    </source>
</evidence>
<evidence type="ECO:0000269" key="7">
    <source>
    </source>
</evidence>
<evidence type="ECO:0000269" key="8">
    <source>
    </source>
</evidence>
<evidence type="ECO:0000269" key="9">
    <source>
    </source>
</evidence>
<evidence type="ECO:0000269" key="10">
    <source>
    </source>
</evidence>
<evidence type="ECO:0000269" key="11">
    <source ref="1"/>
</evidence>
<evidence type="ECO:0000303" key="12">
    <source>
    </source>
</evidence>
<evidence type="ECO:0000303" key="13">
    <source>
    </source>
</evidence>
<evidence type="ECO:0000303" key="14">
    <source ref="1"/>
</evidence>
<evidence type="ECO:0000303" key="15">
    <source ref="3"/>
</evidence>
<evidence type="ECO:0000305" key="16"/>
<evidence type="ECO:0007744" key="17">
    <source>
        <dbReference type="PDB" id="6A69"/>
    </source>
</evidence>
<comment type="function">
    <text evidence="2 9 10">Probable homophilic and heterophilic cell adhesion molecule involved in long term potentiation at hippocampal excitatory synapses through activation of p38MAPK. May also regulate neurite outgrowth by activating the FGFR1 signaling pathway. May play a role in synaptic plasticity (By similarity). Also acts as a chaperone for ATP2B1; stabilizes ATP2B1 and increases its ATPase activity (PubMed:30190470). Promotes localization of XKR8 at the cell membrane (PubMed:27503893).</text>
</comment>
<comment type="subunit">
    <text evidence="9 10">Interacts with ATP2B1; this interaction stabilizes ATP2B1 and increases ATPase activity; this interaction controls T cell calcium homeostasis following T cell activation (PubMed:30190470). Interacts with XKR8; promoting its localization at the cell membrane (PubMed:27503893).</text>
</comment>
<comment type="interaction">
    <interactant intactId="EBI-12839590">
        <id>Q9Y639-1</id>
    </interactant>
    <interactant intactId="EBI-3867333">
        <id>A8MQ03</id>
        <label>CYSRT1</label>
    </interactant>
    <organismsDiffer>false</organismsDiffer>
    <experiments>3</experiments>
</comment>
<comment type="interaction">
    <interactant intactId="EBI-12839590">
        <id>Q9Y639-1</id>
    </interactant>
    <interactant intactId="EBI-466029">
        <id>P42858</id>
        <label>HTT</label>
    </interactant>
    <organismsDiffer>false</organismsDiffer>
    <experiments>6</experiments>
</comment>
<comment type="subcellular location">
    <subcellularLocation>
        <location evidence="2">Cell membrane</location>
        <topology evidence="2">Single-pass type I membrane protein</topology>
    </subcellularLocation>
</comment>
<comment type="subcellular location">
    <molecule>Isoform 2</molecule>
    <subcellularLocation>
        <location evidence="2">Postsynaptic density</location>
    </subcellularLocation>
</comment>
<comment type="alternative products">
    <event type="alternative splicing"/>
    <isoform>
        <id>Q9Y639-2</id>
        <name>2</name>
        <name>SDR-1-beta</name>
        <sequence type="displayed"/>
    </isoform>
    <isoform>
        <id>Q9Y639-1</id>
        <name>1</name>
        <name>SDR-1-alpha</name>
        <sequence type="described" ref="VSP_039251"/>
    </isoform>
    <isoform>
        <id>Q9Y639-3</id>
        <name>3</name>
        <sequence type="described" ref="VSP_039251 VSP_039253"/>
    </isoform>
    <isoform>
        <id>Q9Y639-4</id>
        <name>4</name>
        <sequence type="described" ref="VSP_039252"/>
    </isoform>
    <isoform>
        <id>Q9Y639-5</id>
        <name>5</name>
        <sequence type="described" ref="VSP_039253"/>
    </isoform>
</comment>
<comment type="tissue specificity">
    <text evidence="6 11">Isoform 1 is ubiquitously expressed. Isoform 2 is expressed in brain cortex and cerebellum (at protein level).</text>
</comment>
<comment type="domain">
    <text evidence="1">Some isoforms lack the first Ig-like domain which may confer homophilic adhesion activity. However, they can bind and activate FGFR1 (By similarity).</text>
</comment>
<comment type="sequence caution" evidence="16">
    <conflict type="erroneous initiation">
        <sequence resource="EMBL-CDS" id="BAD93049"/>
    </conflict>
    <text>Extended N-terminus.</text>
</comment>
<accession>Q9Y639</accession>
<accession>B2RAL7</accession>
<accession>B7Z4D3</accession>
<accession>B7ZLL2</accession>
<accession>Q17R52</accession>
<accession>Q59EJ9</accession>
<accession>Q6NVX7</accession>
<accession>Q9Y640</accession>
<sequence length="398" mass="44387">MSGSSLPSALALSLLLVSGSLLPGPGAAQNAGFVKSPMSETKLTGDAFELYCDVVGSPTPEIQWWYAEVNRAESFRQLWDGARKRRVTVNTAYGSNGVSVLRITRLTLEDSGTYECRASNDPKRNDLRQNPSITWIRAQATISVLQKPRIVTSEEVIIRDSPVLPVTLQCNLTSSSHTLTYSYWTKNGVELSATRKNASNMEYRINKPRAEDSGEYHCVYHFVSAPKANATIEVKAAPDITGHKRSENKNEGQDATMYCKSVGYPHPDWIWRKKENGMPMDIVNTSGRFFIINKENYTELNIVNLQITEDPGEYECNATNAIGSASVVTVLRVRSHLAPLWPFLGILAEIIILVVIIVVYEKRKRPDEVPDDDEPAGPMKTNSTNNHKDKNLRQRNTN</sequence>
<feature type="signal peptide">
    <location>
        <begin position="1"/>
        <end position="28"/>
    </location>
</feature>
<feature type="chain" id="PRO_0000394470" description="Neuroplastin">
    <location>
        <begin position="29"/>
        <end position="398"/>
    </location>
</feature>
<feature type="topological domain" description="Extracellular" evidence="3">
    <location>
        <begin position="29"/>
        <end position="339"/>
    </location>
</feature>
<feature type="transmembrane region" description="Helical" evidence="10">
    <location>
        <begin position="340"/>
        <end position="360"/>
    </location>
</feature>
<feature type="topological domain" description="Cytoplasmic" evidence="3">
    <location>
        <begin position="361"/>
        <end position="398"/>
    </location>
</feature>
<feature type="domain" description="Ig-like 1" evidence="4">
    <location>
        <begin position="29"/>
        <end position="134"/>
    </location>
</feature>
<feature type="domain" description="Ig-like 2" evidence="4">
    <location>
        <begin position="148"/>
        <end position="235"/>
    </location>
</feature>
<feature type="domain" description="Ig-like 3" evidence="4">
    <location>
        <begin position="238"/>
        <end position="329"/>
    </location>
</feature>
<feature type="region of interest" description="Narpin; mediates binding with FGFR1 and has antidepressant-like activity" evidence="1">
    <location>
        <begin position="149"/>
        <end position="161"/>
    </location>
</feature>
<feature type="region of interest" description="Disordered" evidence="5">
    <location>
        <begin position="365"/>
        <end position="398"/>
    </location>
</feature>
<feature type="glycosylation site" description="N-linked (GlcNAc...) asparagine" evidence="3">
    <location>
        <position position="171"/>
    </location>
</feature>
<feature type="glycosylation site" description="N-linked (GlcNAc...) asparagine" evidence="3">
    <location>
        <position position="197"/>
    </location>
</feature>
<feature type="glycosylation site" description="N-linked (GlcNAc...) asparagine" evidence="8">
    <location>
        <position position="229"/>
    </location>
</feature>
<feature type="glycosylation site" description="N-linked (GlcNAc...) asparagine" evidence="7">
    <location>
        <position position="284"/>
    </location>
</feature>
<feature type="glycosylation site" description="N-linked (GlcNAc...) asparagine" evidence="7">
    <location>
        <position position="296"/>
    </location>
</feature>
<feature type="glycosylation site" description="N-linked (GlcNAc...) asparagine" evidence="3">
    <location>
        <position position="317"/>
    </location>
</feature>
<feature type="disulfide bond" evidence="4">
    <location>
        <begin position="52"/>
        <end position="116"/>
    </location>
</feature>
<feature type="disulfide bond" evidence="4">
    <location>
        <begin position="170"/>
        <end position="218"/>
    </location>
</feature>
<feature type="disulfide bond" evidence="10">
    <location>
        <begin position="259"/>
        <end position="316"/>
    </location>
</feature>
<feature type="splice variant" id="VSP_039251" description="In isoform 1 and isoform 3." evidence="12 13 14">
    <original>AGFVKSPMSETKLTGDAFELYCDVVGSPTPEIQWWYAEVNRAESFRQLWDGARKRRVTVNTAYGSNGVSVLRITRLTLEDSGTYECRASNDPKRNDLRQNPSITWIRAQATISVLQK</original>
    <variation>E</variation>
    <location>
        <begin position="31"/>
        <end position="147"/>
    </location>
</feature>
<feature type="splice variant" id="VSP_039252" description="In isoform 4." evidence="15">
    <original>NAIGSASVVTVLRVRSHLAPLWPFLGILAEIIILVVIIVVYEKRKRPDEVPDDDEPAGPMKTNSTNNHKDKNLRQRNTN</original>
    <variation>WPHSGLSWEFWLKLSSLW</variation>
    <location>
        <begin position="320"/>
        <end position="398"/>
    </location>
</feature>
<feature type="splice variant" id="VSP_039253" description="In isoform 3 and isoform 5." evidence="12 13 14">
    <location>
        <begin position="372"/>
        <end position="375"/>
    </location>
</feature>
<feature type="sequence conflict" description="In Ref. 2; BAH12519." evidence="16" ref="2">
    <original>E</original>
    <variation>K</variation>
    <location>
        <position position="299"/>
    </location>
</feature>
<name>NPTN_HUMAN</name>
<protein>
    <recommendedName>
        <fullName>Neuroplastin</fullName>
    </recommendedName>
    <alternativeName>
        <fullName>Stromal cell-derived receptor 1</fullName>
        <shortName>SDR-1</shortName>
    </alternativeName>
</protein>
<organism>
    <name type="scientific">Homo sapiens</name>
    <name type="common">Human</name>
    <dbReference type="NCBI Taxonomy" id="9606"/>
    <lineage>
        <taxon>Eukaryota</taxon>
        <taxon>Metazoa</taxon>
        <taxon>Chordata</taxon>
        <taxon>Craniata</taxon>
        <taxon>Vertebrata</taxon>
        <taxon>Euteleostomi</taxon>
        <taxon>Mammalia</taxon>
        <taxon>Eutheria</taxon>
        <taxon>Euarchontoglires</taxon>
        <taxon>Primates</taxon>
        <taxon>Haplorrhini</taxon>
        <taxon>Catarrhini</taxon>
        <taxon>Hominidae</taxon>
        <taxon>Homo</taxon>
    </lineage>
</organism>